<dbReference type="EC" id="7.4.2.8" evidence="1"/>
<dbReference type="EMBL" id="CP001661">
    <property type="protein sequence ID" value="ACT18726.1"/>
    <property type="molecule type" value="Genomic_DNA"/>
</dbReference>
<dbReference type="SMR" id="C6E178"/>
<dbReference type="STRING" id="443144.GM21_2690"/>
<dbReference type="KEGG" id="gem:GM21_2690"/>
<dbReference type="eggNOG" id="COG0653">
    <property type="taxonomic scope" value="Bacteria"/>
</dbReference>
<dbReference type="HOGENOM" id="CLU_005314_3_0_7"/>
<dbReference type="OrthoDB" id="9805579at2"/>
<dbReference type="GO" id="GO:0031522">
    <property type="term" value="C:cell envelope Sec protein transport complex"/>
    <property type="evidence" value="ECO:0007669"/>
    <property type="project" value="TreeGrafter"/>
</dbReference>
<dbReference type="GO" id="GO:0005829">
    <property type="term" value="C:cytosol"/>
    <property type="evidence" value="ECO:0007669"/>
    <property type="project" value="TreeGrafter"/>
</dbReference>
<dbReference type="GO" id="GO:0005886">
    <property type="term" value="C:plasma membrane"/>
    <property type="evidence" value="ECO:0007669"/>
    <property type="project" value="UniProtKB-SubCell"/>
</dbReference>
<dbReference type="GO" id="GO:0005524">
    <property type="term" value="F:ATP binding"/>
    <property type="evidence" value="ECO:0007669"/>
    <property type="project" value="UniProtKB-UniRule"/>
</dbReference>
<dbReference type="GO" id="GO:0046872">
    <property type="term" value="F:metal ion binding"/>
    <property type="evidence" value="ECO:0007669"/>
    <property type="project" value="UniProtKB-KW"/>
</dbReference>
<dbReference type="GO" id="GO:0008564">
    <property type="term" value="F:protein-exporting ATPase activity"/>
    <property type="evidence" value="ECO:0007669"/>
    <property type="project" value="UniProtKB-EC"/>
</dbReference>
<dbReference type="GO" id="GO:0065002">
    <property type="term" value="P:intracellular protein transmembrane transport"/>
    <property type="evidence" value="ECO:0007669"/>
    <property type="project" value="UniProtKB-UniRule"/>
</dbReference>
<dbReference type="GO" id="GO:0017038">
    <property type="term" value="P:protein import"/>
    <property type="evidence" value="ECO:0007669"/>
    <property type="project" value="InterPro"/>
</dbReference>
<dbReference type="GO" id="GO:0006605">
    <property type="term" value="P:protein targeting"/>
    <property type="evidence" value="ECO:0007669"/>
    <property type="project" value="UniProtKB-UniRule"/>
</dbReference>
<dbReference type="GO" id="GO:0043952">
    <property type="term" value="P:protein transport by the Sec complex"/>
    <property type="evidence" value="ECO:0007669"/>
    <property type="project" value="TreeGrafter"/>
</dbReference>
<dbReference type="CDD" id="cd17928">
    <property type="entry name" value="DEXDc_SecA"/>
    <property type="match status" value="1"/>
</dbReference>
<dbReference type="CDD" id="cd18803">
    <property type="entry name" value="SF2_C_secA"/>
    <property type="match status" value="1"/>
</dbReference>
<dbReference type="FunFam" id="3.40.50.300:FF:000113">
    <property type="entry name" value="Preprotein translocase subunit SecA"/>
    <property type="match status" value="1"/>
</dbReference>
<dbReference type="FunFam" id="3.40.50.300:FF:000246">
    <property type="entry name" value="Preprotein translocase subunit SecA"/>
    <property type="match status" value="1"/>
</dbReference>
<dbReference type="FunFam" id="3.40.50.300:FF:000429">
    <property type="entry name" value="Preprotein translocase subunit SecA"/>
    <property type="match status" value="1"/>
</dbReference>
<dbReference type="FunFam" id="3.90.1440.10:FF:000001">
    <property type="entry name" value="Preprotein translocase subunit SecA"/>
    <property type="match status" value="1"/>
</dbReference>
<dbReference type="FunFam" id="1.10.3060.10:FF:000003">
    <property type="entry name" value="Protein translocase subunit SecA"/>
    <property type="match status" value="1"/>
</dbReference>
<dbReference type="FunFam" id="3.40.50.300:FF:000334">
    <property type="entry name" value="Protein translocase subunit SecA"/>
    <property type="match status" value="1"/>
</dbReference>
<dbReference type="Gene3D" id="1.10.3060.10">
    <property type="entry name" value="Helical scaffold and wing domains of SecA"/>
    <property type="match status" value="1"/>
</dbReference>
<dbReference type="Gene3D" id="3.40.50.300">
    <property type="entry name" value="P-loop containing nucleotide triphosphate hydrolases"/>
    <property type="match status" value="2"/>
</dbReference>
<dbReference type="Gene3D" id="3.90.1440.10">
    <property type="entry name" value="SecA, preprotein cross-linking domain"/>
    <property type="match status" value="1"/>
</dbReference>
<dbReference type="HAMAP" id="MF_01382">
    <property type="entry name" value="SecA"/>
    <property type="match status" value="1"/>
</dbReference>
<dbReference type="InterPro" id="IPR014001">
    <property type="entry name" value="Helicase_ATP-bd"/>
</dbReference>
<dbReference type="InterPro" id="IPR027417">
    <property type="entry name" value="P-loop_NTPase"/>
</dbReference>
<dbReference type="InterPro" id="IPR004027">
    <property type="entry name" value="SEC_C_motif"/>
</dbReference>
<dbReference type="InterPro" id="IPR000185">
    <property type="entry name" value="SecA"/>
</dbReference>
<dbReference type="InterPro" id="IPR020937">
    <property type="entry name" value="SecA_CS"/>
</dbReference>
<dbReference type="InterPro" id="IPR011115">
    <property type="entry name" value="SecA_DEAD"/>
</dbReference>
<dbReference type="InterPro" id="IPR014018">
    <property type="entry name" value="SecA_motor_DEAD"/>
</dbReference>
<dbReference type="InterPro" id="IPR011130">
    <property type="entry name" value="SecA_preprotein_X-link_dom"/>
</dbReference>
<dbReference type="InterPro" id="IPR044722">
    <property type="entry name" value="SecA_SF2_C"/>
</dbReference>
<dbReference type="InterPro" id="IPR011116">
    <property type="entry name" value="SecA_Wing/Scaffold"/>
</dbReference>
<dbReference type="InterPro" id="IPR036266">
    <property type="entry name" value="SecA_Wing/Scaffold_sf"/>
</dbReference>
<dbReference type="InterPro" id="IPR036670">
    <property type="entry name" value="SecA_X-link_sf"/>
</dbReference>
<dbReference type="NCBIfam" id="NF009538">
    <property type="entry name" value="PRK12904.1"/>
    <property type="match status" value="1"/>
</dbReference>
<dbReference type="NCBIfam" id="TIGR00963">
    <property type="entry name" value="secA"/>
    <property type="match status" value="1"/>
</dbReference>
<dbReference type="PANTHER" id="PTHR30612:SF0">
    <property type="entry name" value="CHLOROPLAST PROTEIN-TRANSPORTING ATPASE"/>
    <property type="match status" value="1"/>
</dbReference>
<dbReference type="PANTHER" id="PTHR30612">
    <property type="entry name" value="SECA INNER MEMBRANE COMPONENT OF SEC PROTEIN SECRETION SYSTEM"/>
    <property type="match status" value="1"/>
</dbReference>
<dbReference type="Pfam" id="PF21090">
    <property type="entry name" value="P-loop_SecA"/>
    <property type="match status" value="1"/>
</dbReference>
<dbReference type="Pfam" id="PF02810">
    <property type="entry name" value="SEC-C"/>
    <property type="match status" value="1"/>
</dbReference>
<dbReference type="Pfam" id="PF07517">
    <property type="entry name" value="SecA_DEAD"/>
    <property type="match status" value="1"/>
</dbReference>
<dbReference type="Pfam" id="PF01043">
    <property type="entry name" value="SecA_PP_bind"/>
    <property type="match status" value="1"/>
</dbReference>
<dbReference type="Pfam" id="PF07516">
    <property type="entry name" value="SecA_SW"/>
    <property type="match status" value="1"/>
</dbReference>
<dbReference type="PRINTS" id="PR00906">
    <property type="entry name" value="SECA"/>
</dbReference>
<dbReference type="SMART" id="SM00957">
    <property type="entry name" value="SecA_DEAD"/>
    <property type="match status" value="1"/>
</dbReference>
<dbReference type="SMART" id="SM00958">
    <property type="entry name" value="SecA_PP_bind"/>
    <property type="match status" value="1"/>
</dbReference>
<dbReference type="SUPFAM" id="SSF81886">
    <property type="entry name" value="Helical scaffold and wing domains of SecA"/>
    <property type="match status" value="1"/>
</dbReference>
<dbReference type="SUPFAM" id="SSF52540">
    <property type="entry name" value="P-loop containing nucleoside triphosphate hydrolases"/>
    <property type="match status" value="2"/>
</dbReference>
<dbReference type="SUPFAM" id="SSF81767">
    <property type="entry name" value="Pre-protein crosslinking domain of SecA"/>
    <property type="match status" value="1"/>
</dbReference>
<dbReference type="PROSITE" id="PS01312">
    <property type="entry name" value="SECA"/>
    <property type="match status" value="1"/>
</dbReference>
<dbReference type="PROSITE" id="PS51196">
    <property type="entry name" value="SECA_MOTOR_DEAD"/>
    <property type="match status" value="1"/>
</dbReference>
<accession>C6E178</accession>
<feature type="chain" id="PRO_1000215112" description="Protein translocase subunit SecA">
    <location>
        <begin position="1"/>
        <end position="957"/>
    </location>
</feature>
<feature type="region of interest" description="Disordered" evidence="2">
    <location>
        <begin position="924"/>
        <end position="957"/>
    </location>
</feature>
<feature type="binding site" evidence="1">
    <location>
        <position position="87"/>
    </location>
    <ligand>
        <name>ATP</name>
        <dbReference type="ChEBI" id="CHEBI:30616"/>
    </ligand>
</feature>
<feature type="binding site" evidence="1">
    <location>
        <begin position="105"/>
        <end position="109"/>
    </location>
    <ligand>
        <name>ATP</name>
        <dbReference type="ChEBI" id="CHEBI:30616"/>
    </ligand>
</feature>
<feature type="binding site" evidence="1">
    <location>
        <position position="512"/>
    </location>
    <ligand>
        <name>ATP</name>
        <dbReference type="ChEBI" id="CHEBI:30616"/>
    </ligand>
</feature>
<feature type="binding site" evidence="1">
    <location>
        <position position="943"/>
    </location>
    <ligand>
        <name>Zn(2+)</name>
        <dbReference type="ChEBI" id="CHEBI:29105"/>
    </ligand>
</feature>
<feature type="binding site" evidence="1">
    <location>
        <position position="945"/>
    </location>
    <ligand>
        <name>Zn(2+)</name>
        <dbReference type="ChEBI" id="CHEBI:29105"/>
    </ligand>
</feature>
<feature type="binding site" evidence="1">
    <location>
        <position position="954"/>
    </location>
    <ligand>
        <name>Zn(2+)</name>
        <dbReference type="ChEBI" id="CHEBI:29105"/>
    </ligand>
</feature>
<feature type="binding site" evidence="1">
    <location>
        <position position="955"/>
    </location>
    <ligand>
        <name>Zn(2+)</name>
        <dbReference type="ChEBI" id="CHEBI:29105"/>
    </ligand>
</feature>
<protein>
    <recommendedName>
        <fullName evidence="1">Protein translocase subunit SecA</fullName>
        <ecNumber evidence="1">7.4.2.8</ecNumber>
    </recommendedName>
</protein>
<comment type="function">
    <text evidence="1">Part of the Sec protein translocase complex. Interacts with the SecYEG preprotein conducting channel. Has a central role in coupling the hydrolysis of ATP to the transfer of proteins into and across the cell membrane, serving as an ATP-driven molecular motor driving the stepwise translocation of polypeptide chains across the membrane.</text>
</comment>
<comment type="catalytic activity">
    <reaction evidence="1">
        <text>ATP + H2O + cellular proteinSide 1 = ADP + phosphate + cellular proteinSide 2.</text>
        <dbReference type="EC" id="7.4.2.8"/>
    </reaction>
</comment>
<comment type="cofactor">
    <cofactor evidence="1">
        <name>Zn(2+)</name>
        <dbReference type="ChEBI" id="CHEBI:29105"/>
    </cofactor>
    <text evidence="1">May bind 1 zinc ion per subunit.</text>
</comment>
<comment type="subunit">
    <text evidence="1">Monomer and homodimer. Part of the essential Sec protein translocation apparatus which comprises SecA, SecYEG and auxiliary proteins SecDF-YajC and YidC.</text>
</comment>
<comment type="subcellular location">
    <subcellularLocation>
        <location evidence="1">Cell inner membrane</location>
        <topology evidence="1">Peripheral membrane protein</topology>
        <orientation evidence="1">Cytoplasmic side</orientation>
    </subcellularLocation>
    <subcellularLocation>
        <location evidence="1">Cytoplasm</location>
    </subcellularLocation>
    <text evidence="1">Distribution is 50-50.</text>
</comment>
<comment type="similarity">
    <text evidence="1">Belongs to the SecA family.</text>
</comment>
<proteinExistence type="inferred from homology"/>
<gene>
    <name evidence="1" type="primary">secA</name>
    <name type="ordered locus">GM21_2690</name>
</gene>
<name>SECA_GEOSM</name>
<evidence type="ECO:0000255" key="1">
    <source>
        <dbReference type="HAMAP-Rule" id="MF_01382"/>
    </source>
</evidence>
<evidence type="ECO:0000256" key="2">
    <source>
        <dbReference type="SAM" id="MobiDB-lite"/>
    </source>
</evidence>
<reference key="1">
    <citation type="submission" date="2009-07" db="EMBL/GenBank/DDBJ databases">
        <title>Complete sequence of Geobacter sp. M21.</title>
        <authorList>
            <consortium name="US DOE Joint Genome Institute"/>
            <person name="Lucas S."/>
            <person name="Copeland A."/>
            <person name="Lapidus A."/>
            <person name="Glavina del Rio T."/>
            <person name="Dalin E."/>
            <person name="Tice H."/>
            <person name="Bruce D."/>
            <person name="Goodwin L."/>
            <person name="Pitluck S."/>
            <person name="Saunders E."/>
            <person name="Brettin T."/>
            <person name="Detter J.C."/>
            <person name="Han C."/>
            <person name="Larimer F."/>
            <person name="Land M."/>
            <person name="Hauser L."/>
            <person name="Kyrpides N."/>
            <person name="Ovchinnikova G."/>
            <person name="Lovley D."/>
        </authorList>
    </citation>
    <scope>NUCLEOTIDE SEQUENCE [LARGE SCALE GENOMIC DNA]</scope>
    <source>
        <strain>M21</strain>
    </source>
</reference>
<keyword id="KW-0067">ATP-binding</keyword>
<keyword id="KW-0997">Cell inner membrane</keyword>
<keyword id="KW-1003">Cell membrane</keyword>
<keyword id="KW-0963">Cytoplasm</keyword>
<keyword id="KW-0472">Membrane</keyword>
<keyword id="KW-0479">Metal-binding</keyword>
<keyword id="KW-0547">Nucleotide-binding</keyword>
<keyword id="KW-0653">Protein transport</keyword>
<keyword id="KW-1278">Translocase</keyword>
<keyword id="KW-0811">Translocation</keyword>
<keyword id="KW-0813">Transport</keyword>
<keyword id="KW-0862">Zinc</keyword>
<organism>
    <name type="scientific">Geobacter sp. (strain M21)</name>
    <dbReference type="NCBI Taxonomy" id="443144"/>
    <lineage>
        <taxon>Bacteria</taxon>
        <taxon>Pseudomonadati</taxon>
        <taxon>Thermodesulfobacteriota</taxon>
        <taxon>Desulfuromonadia</taxon>
        <taxon>Geobacterales</taxon>
        <taxon>Geobacteraceae</taxon>
        <taxon>Geobacter</taxon>
    </lineage>
</organism>
<sequence length="957" mass="109030">MFGALIKKLVGSKNERELKRMWPIVERINQLEPELVKLSDEELRGKTAQFKERYSRGESLDSMLPEAFAVCREAGKRVLGMRHFDVQLIGGMVLHSGKIAEMKTGEGKTLVATLPSYLNGISGRGVHVVTVNDYLAKRDSDWMGRIHKFLGLSVGVIVHGLEDYERREAYAADITYGTNNEFGFDYLRDNMKFDLSEYVQRPFNFAVVDEVDSILIDEARTPLIISGPTEDSTDKYYIIDRIIPLLKKGEVIEVEANTLSGKRKTYTGDFTVDEKAKSASLTEEGVLKVEKLLKIENLYDPRNMEILHHTQQALRAHALFKRDVDYVVRDNEVLIVDEFTGRLMPGRRWSDGLHQAIEAKEGAKIENENQTLATITFQNYFRMYEKLSGMTGTADTEAEEFHKIYKLDVVVIPTNRPLLRPDFPDVIYKTEREKFNAVIGEIKELHEKGQPILVGTISIEKSEELSELLKRQGIPHFVLNAKQHEKEAEIVAQAGRKGMVTIATNMAGRGTDIVLGGNPDGLARQEFNGTPETRTEEFMAAFIETLSKDLPEKELLQSLEREYPGIMPVVAACLKQGGEIDLEELERQVLAEHQKQFNLLVDKNKPVCAAEHDEVVALGGLHILGTERHESRRIDNQLRGRSGRQGDPGSSRFYLSLQDDLLRIFGSERVSMIMDKLGIEEGEAITHGLITRAIENAQKKVEAHNFEIRKHLIEYDDVMNKQREVIYTQRKEILGGNEIRESFTGMMEEAVGDIVAAYVIDRTPAREWDWQGITDTVQKVFGFHLDLTPDLMDRITPVNFDETLRTTARERFQQRLTEFGDDLMDHLIKVIMLQVIDAQWKDHLLSIDHLKEGIGLRGYGQKDPKQEYKREAYKLFMDMMLRIREEVVEKIFWVQVGSEEEMEQFELEQPQQRMVFNLVDEEAAAPAQAPSKSKRSAGRNDPCPCGSGQKYKKCCGK</sequence>